<feature type="chain" id="PRO_1000001530" description="Recombination protein RecR">
    <location>
        <begin position="1"/>
        <end position="199"/>
    </location>
</feature>
<feature type="domain" description="Toprim" evidence="1">
    <location>
        <begin position="81"/>
        <end position="176"/>
    </location>
</feature>
<feature type="zinc finger region" description="C4-type" evidence="1">
    <location>
        <begin position="58"/>
        <end position="73"/>
    </location>
</feature>
<protein>
    <recommendedName>
        <fullName evidence="1">Recombination protein RecR</fullName>
    </recommendedName>
</protein>
<gene>
    <name evidence="1" type="primary">recR</name>
    <name type="ordered locus">CD630_00180</name>
</gene>
<accession>Q18CA2</accession>
<evidence type="ECO:0000255" key="1">
    <source>
        <dbReference type="HAMAP-Rule" id="MF_00017"/>
    </source>
</evidence>
<sequence>MQVYTGPITRLIEEFSKLPGVGRKTAQRLAFHIINMNTNDVEALSKAIIDAKREIRYCSICCNITDTDPCSMCSNKSRDSSVICVVEDPRDVAAMERTREFKGQYHVLNGVISPMDGIGPDMLKIKELIQRLGNQEVKEIIMATNPTIEGEATAMYIARLVKPMGIKVTRIAHGLPVGGDLEYADEVTISKALEGRREI</sequence>
<reference key="1">
    <citation type="journal article" date="2006" name="Nat. Genet.">
        <title>The multidrug-resistant human pathogen Clostridium difficile has a highly mobile, mosaic genome.</title>
        <authorList>
            <person name="Sebaihia M."/>
            <person name="Wren B.W."/>
            <person name="Mullany P."/>
            <person name="Fairweather N.F."/>
            <person name="Minton N."/>
            <person name="Stabler R."/>
            <person name="Thomson N.R."/>
            <person name="Roberts A.P."/>
            <person name="Cerdeno-Tarraga A.M."/>
            <person name="Wang H."/>
            <person name="Holden M.T.G."/>
            <person name="Wright A."/>
            <person name="Churcher C."/>
            <person name="Quail M.A."/>
            <person name="Baker S."/>
            <person name="Bason N."/>
            <person name="Brooks K."/>
            <person name="Chillingworth T."/>
            <person name="Cronin A."/>
            <person name="Davis P."/>
            <person name="Dowd L."/>
            <person name="Fraser A."/>
            <person name="Feltwell T."/>
            <person name="Hance Z."/>
            <person name="Holroyd S."/>
            <person name="Jagels K."/>
            <person name="Moule S."/>
            <person name="Mungall K."/>
            <person name="Price C."/>
            <person name="Rabbinowitsch E."/>
            <person name="Sharp S."/>
            <person name="Simmonds M."/>
            <person name="Stevens K."/>
            <person name="Unwin L."/>
            <person name="Whithead S."/>
            <person name="Dupuy B."/>
            <person name="Dougan G."/>
            <person name="Barrell B."/>
            <person name="Parkhill J."/>
        </authorList>
    </citation>
    <scope>NUCLEOTIDE SEQUENCE [LARGE SCALE GENOMIC DNA]</scope>
    <source>
        <strain>630</strain>
    </source>
</reference>
<dbReference type="EMBL" id="AM180355">
    <property type="protein sequence ID" value="CAJ66832.1"/>
    <property type="molecule type" value="Genomic_DNA"/>
</dbReference>
<dbReference type="RefSeq" id="WP_003421618.1">
    <property type="nucleotide sequence ID" value="NZ_JAUPES010000052.1"/>
</dbReference>
<dbReference type="RefSeq" id="YP_001086481.1">
    <property type="nucleotide sequence ID" value="NC_009089.1"/>
</dbReference>
<dbReference type="SMR" id="Q18CA2"/>
<dbReference type="STRING" id="272563.CD630_00180"/>
<dbReference type="EnsemblBacteria" id="CAJ66832">
    <property type="protein sequence ID" value="CAJ66832"/>
    <property type="gene ID" value="CD630_00180"/>
</dbReference>
<dbReference type="GeneID" id="66352467"/>
<dbReference type="KEGG" id="cdf:CD630_00180"/>
<dbReference type="KEGG" id="pdc:CDIF630_00032"/>
<dbReference type="PATRIC" id="fig|272563.120.peg.18"/>
<dbReference type="eggNOG" id="COG0353">
    <property type="taxonomic scope" value="Bacteria"/>
</dbReference>
<dbReference type="OrthoDB" id="9802672at2"/>
<dbReference type="PhylomeDB" id="Q18CA2"/>
<dbReference type="BioCyc" id="PDIF272563:G12WB-23-MONOMER"/>
<dbReference type="Proteomes" id="UP000001978">
    <property type="component" value="Chromosome"/>
</dbReference>
<dbReference type="GO" id="GO:0003677">
    <property type="term" value="F:DNA binding"/>
    <property type="evidence" value="ECO:0007669"/>
    <property type="project" value="UniProtKB-UniRule"/>
</dbReference>
<dbReference type="GO" id="GO:0008270">
    <property type="term" value="F:zinc ion binding"/>
    <property type="evidence" value="ECO:0007669"/>
    <property type="project" value="UniProtKB-KW"/>
</dbReference>
<dbReference type="GO" id="GO:0006310">
    <property type="term" value="P:DNA recombination"/>
    <property type="evidence" value="ECO:0007669"/>
    <property type="project" value="UniProtKB-UniRule"/>
</dbReference>
<dbReference type="GO" id="GO:0006281">
    <property type="term" value="P:DNA repair"/>
    <property type="evidence" value="ECO:0007669"/>
    <property type="project" value="UniProtKB-UniRule"/>
</dbReference>
<dbReference type="CDD" id="cd01025">
    <property type="entry name" value="TOPRIM_recR"/>
    <property type="match status" value="1"/>
</dbReference>
<dbReference type="Gene3D" id="3.30.60.80">
    <property type="match status" value="1"/>
</dbReference>
<dbReference type="Gene3D" id="3.40.1360.10">
    <property type="match status" value="1"/>
</dbReference>
<dbReference type="Gene3D" id="6.10.250.240">
    <property type="match status" value="1"/>
</dbReference>
<dbReference type="Gene3D" id="1.10.8.420">
    <property type="entry name" value="RecR Domain 1"/>
    <property type="match status" value="1"/>
</dbReference>
<dbReference type="HAMAP" id="MF_00017">
    <property type="entry name" value="RecR"/>
    <property type="match status" value="1"/>
</dbReference>
<dbReference type="InterPro" id="IPR000093">
    <property type="entry name" value="DNA_Rcmb_RecR"/>
</dbReference>
<dbReference type="InterPro" id="IPR023627">
    <property type="entry name" value="Rcmb_RecR"/>
</dbReference>
<dbReference type="InterPro" id="IPR015967">
    <property type="entry name" value="Rcmb_RecR_Znf"/>
</dbReference>
<dbReference type="InterPro" id="IPR006171">
    <property type="entry name" value="TOPRIM_dom"/>
</dbReference>
<dbReference type="InterPro" id="IPR034137">
    <property type="entry name" value="TOPRIM_RecR"/>
</dbReference>
<dbReference type="NCBIfam" id="TIGR00615">
    <property type="entry name" value="recR"/>
    <property type="match status" value="1"/>
</dbReference>
<dbReference type="PANTHER" id="PTHR30446">
    <property type="entry name" value="RECOMBINATION PROTEIN RECR"/>
    <property type="match status" value="1"/>
</dbReference>
<dbReference type="PANTHER" id="PTHR30446:SF0">
    <property type="entry name" value="RECOMBINATION PROTEIN RECR"/>
    <property type="match status" value="1"/>
</dbReference>
<dbReference type="Pfam" id="PF21175">
    <property type="entry name" value="RecR_C"/>
    <property type="match status" value="1"/>
</dbReference>
<dbReference type="Pfam" id="PF21176">
    <property type="entry name" value="RecR_HhH"/>
    <property type="match status" value="1"/>
</dbReference>
<dbReference type="Pfam" id="PF02132">
    <property type="entry name" value="RecR_ZnF"/>
    <property type="match status" value="1"/>
</dbReference>
<dbReference type="Pfam" id="PF13662">
    <property type="entry name" value="Toprim_4"/>
    <property type="match status" value="1"/>
</dbReference>
<dbReference type="SMART" id="SM00493">
    <property type="entry name" value="TOPRIM"/>
    <property type="match status" value="1"/>
</dbReference>
<dbReference type="SUPFAM" id="SSF111304">
    <property type="entry name" value="Recombination protein RecR"/>
    <property type="match status" value="1"/>
</dbReference>
<dbReference type="PROSITE" id="PS50880">
    <property type="entry name" value="TOPRIM"/>
    <property type="match status" value="1"/>
</dbReference>
<comment type="function">
    <text evidence="1">May play a role in DNA repair. It seems to be involved in an RecBC-independent recombinational process of DNA repair. It may act with RecF and RecO.</text>
</comment>
<comment type="similarity">
    <text evidence="1">Belongs to the RecR family.</text>
</comment>
<proteinExistence type="inferred from homology"/>
<organism>
    <name type="scientific">Clostridioides difficile (strain 630)</name>
    <name type="common">Peptoclostridium difficile</name>
    <dbReference type="NCBI Taxonomy" id="272563"/>
    <lineage>
        <taxon>Bacteria</taxon>
        <taxon>Bacillati</taxon>
        <taxon>Bacillota</taxon>
        <taxon>Clostridia</taxon>
        <taxon>Peptostreptococcales</taxon>
        <taxon>Peptostreptococcaceae</taxon>
        <taxon>Clostridioides</taxon>
    </lineage>
</organism>
<keyword id="KW-0227">DNA damage</keyword>
<keyword id="KW-0233">DNA recombination</keyword>
<keyword id="KW-0234">DNA repair</keyword>
<keyword id="KW-0479">Metal-binding</keyword>
<keyword id="KW-1185">Reference proteome</keyword>
<keyword id="KW-0862">Zinc</keyword>
<keyword id="KW-0863">Zinc-finger</keyword>
<name>RECR_CLOD6</name>